<accession>A7NIG2</accession>
<sequence length="395" mass="42472">MPRVIYFDCFSGISGDMALGALLDAGLSLDALREALRRLNVDGWDLNAMREVRGPLAGTRAHVIAPEGHVHRTLDDIRAIISTSSLPAAVIERSMRIFAILAEAEAQVHGTTVDRIHFHEVGALDAIVDIVGVAAGLDLLGVEQVFASPLPLGAGWVRSAHGPLPIPSPATLAILASVGAPITPDETPFELTTPTGAAILAALATFRRPSMRLCAIGYGFGARQMERPNALRVWLGDPDEEEDASRQRGLVLLETNIDDQPAEQIAYATDVLRAAGALDVWCTPILMKKGRPGVQLSALVTADLEDTAVSLLMCETTTLGVRRRTVERHVCDRDIVEIATPLGVARVKRKRWRGELIGAAPEYEDCARIAREHGVPLAAVYQMVMGRLENGATKC</sequence>
<feature type="chain" id="PRO_1000136692" description="Putative nickel insertion protein">
    <location>
        <begin position="1"/>
        <end position="395"/>
    </location>
</feature>
<comment type="similarity">
    <text evidence="1">Belongs to the LarC family.</text>
</comment>
<protein>
    <recommendedName>
        <fullName evidence="1">Putative nickel insertion protein</fullName>
    </recommendedName>
</protein>
<evidence type="ECO:0000255" key="1">
    <source>
        <dbReference type="HAMAP-Rule" id="MF_01074"/>
    </source>
</evidence>
<name>Y1165_ROSCS</name>
<gene>
    <name type="ordered locus">Rcas_1165</name>
</gene>
<proteinExistence type="inferred from homology"/>
<organism>
    <name type="scientific">Roseiflexus castenholzii (strain DSM 13941 / HLO8)</name>
    <dbReference type="NCBI Taxonomy" id="383372"/>
    <lineage>
        <taxon>Bacteria</taxon>
        <taxon>Bacillati</taxon>
        <taxon>Chloroflexota</taxon>
        <taxon>Chloroflexia</taxon>
        <taxon>Chloroflexales</taxon>
        <taxon>Roseiflexineae</taxon>
        <taxon>Roseiflexaceae</taxon>
        <taxon>Roseiflexus</taxon>
    </lineage>
</organism>
<dbReference type="EMBL" id="CP000804">
    <property type="protein sequence ID" value="ABU57262.1"/>
    <property type="molecule type" value="Genomic_DNA"/>
</dbReference>
<dbReference type="RefSeq" id="WP_012119692.1">
    <property type="nucleotide sequence ID" value="NC_009767.1"/>
</dbReference>
<dbReference type="SMR" id="A7NIG2"/>
<dbReference type="STRING" id="383372.Rcas_1165"/>
<dbReference type="KEGG" id="rca:Rcas_1165"/>
<dbReference type="eggNOG" id="COG1641">
    <property type="taxonomic scope" value="Bacteria"/>
</dbReference>
<dbReference type="HOGENOM" id="CLU_028523_2_1_0"/>
<dbReference type="OrthoDB" id="9765625at2"/>
<dbReference type="Proteomes" id="UP000000263">
    <property type="component" value="Chromosome"/>
</dbReference>
<dbReference type="GO" id="GO:0016829">
    <property type="term" value="F:lyase activity"/>
    <property type="evidence" value="ECO:0007669"/>
    <property type="project" value="UniProtKB-UniRule"/>
</dbReference>
<dbReference type="GO" id="GO:0016151">
    <property type="term" value="F:nickel cation binding"/>
    <property type="evidence" value="ECO:0007669"/>
    <property type="project" value="UniProtKB-UniRule"/>
</dbReference>
<dbReference type="Gene3D" id="3.10.20.300">
    <property type="entry name" value="mk0293 like domain"/>
    <property type="match status" value="1"/>
</dbReference>
<dbReference type="Gene3D" id="3.30.70.1380">
    <property type="entry name" value="Transcriptional regulatory protein pf0864 domain like"/>
    <property type="match status" value="1"/>
</dbReference>
<dbReference type="HAMAP" id="MF_01074">
    <property type="entry name" value="LarC"/>
    <property type="match status" value="1"/>
</dbReference>
<dbReference type="InterPro" id="IPR002822">
    <property type="entry name" value="Ni_insertion"/>
</dbReference>
<dbReference type="NCBIfam" id="TIGR00299">
    <property type="entry name" value="nickel pincer cofactor biosynthesis protein LarC"/>
    <property type="match status" value="1"/>
</dbReference>
<dbReference type="PANTHER" id="PTHR36566">
    <property type="entry name" value="NICKEL INSERTION PROTEIN-RELATED"/>
    <property type="match status" value="1"/>
</dbReference>
<dbReference type="PANTHER" id="PTHR36566:SF1">
    <property type="entry name" value="PYRIDINIUM-3,5-BISTHIOCARBOXYLIC ACID MONONUCLEOTIDE NICKEL INSERTION PROTEIN"/>
    <property type="match status" value="1"/>
</dbReference>
<dbReference type="Pfam" id="PF01969">
    <property type="entry name" value="Ni_insertion"/>
    <property type="match status" value="1"/>
</dbReference>
<keyword id="KW-0533">Nickel</keyword>
<keyword id="KW-1185">Reference proteome</keyword>
<reference key="1">
    <citation type="submission" date="2007-08" db="EMBL/GenBank/DDBJ databases">
        <title>Complete sequence of Roseiflexus castenholzii DSM 13941.</title>
        <authorList>
            <consortium name="US DOE Joint Genome Institute"/>
            <person name="Copeland A."/>
            <person name="Lucas S."/>
            <person name="Lapidus A."/>
            <person name="Barry K."/>
            <person name="Glavina del Rio T."/>
            <person name="Dalin E."/>
            <person name="Tice H."/>
            <person name="Pitluck S."/>
            <person name="Thompson L.S."/>
            <person name="Brettin T."/>
            <person name="Bruce D."/>
            <person name="Detter J.C."/>
            <person name="Han C."/>
            <person name="Tapia R."/>
            <person name="Schmutz J."/>
            <person name="Larimer F."/>
            <person name="Land M."/>
            <person name="Hauser L."/>
            <person name="Kyrpides N."/>
            <person name="Mikhailova N."/>
            <person name="Bryant D.A."/>
            <person name="Hanada S."/>
            <person name="Tsukatani Y."/>
            <person name="Richardson P."/>
        </authorList>
    </citation>
    <scope>NUCLEOTIDE SEQUENCE [LARGE SCALE GENOMIC DNA]</scope>
    <source>
        <strain>DSM 13941 / HLO8</strain>
    </source>
</reference>